<gene>
    <name type="primary">AGBL3</name>
    <name evidence="2" type="synonym">CCP3</name>
</gene>
<dbReference type="EC" id="3.4.17.-" evidence="2"/>
<dbReference type="EMBL" id="AAFC03005324">
    <property type="status" value="NOT_ANNOTATED_CDS"/>
    <property type="molecule type" value="Genomic_DNA"/>
</dbReference>
<dbReference type="EMBL" id="AAFC03061398">
    <property type="status" value="NOT_ANNOTATED_CDS"/>
    <property type="molecule type" value="Genomic_DNA"/>
</dbReference>
<dbReference type="EMBL" id="AAFC03061399">
    <property type="status" value="NOT_ANNOTATED_CDS"/>
    <property type="molecule type" value="Genomic_DNA"/>
</dbReference>
<dbReference type="EMBL" id="AAFC03061400">
    <property type="status" value="NOT_ANNOTATED_CDS"/>
    <property type="molecule type" value="Genomic_DNA"/>
</dbReference>
<dbReference type="EMBL" id="AAFC03061401">
    <property type="status" value="NOT_ANNOTATED_CDS"/>
    <property type="molecule type" value="Genomic_DNA"/>
</dbReference>
<dbReference type="SMR" id="E1B9D8"/>
<dbReference type="FunCoup" id="E1B9D8">
    <property type="interactions" value="374"/>
</dbReference>
<dbReference type="STRING" id="9913.ENSBTAP00000055543"/>
<dbReference type="PaxDb" id="9913-ENSBTAP00000033443"/>
<dbReference type="eggNOG" id="KOG1814">
    <property type="taxonomic scope" value="Eukaryota"/>
</dbReference>
<dbReference type="eggNOG" id="KOG3641">
    <property type="taxonomic scope" value="Eukaryota"/>
</dbReference>
<dbReference type="InParanoid" id="E1B9D8"/>
<dbReference type="OrthoDB" id="10253041at2759"/>
<dbReference type="Proteomes" id="UP000009136">
    <property type="component" value="Unplaced"/>
</dbReference>
<dbReference type="GO" id="GO:0005814">
    <property type="term" value="C:centriole"/>
    <property type="evidence" value="ECO:0000318"/>
    <property type="project" value="GO_Central"/>
</dbReference>
<dbReference type="GO" id="GO:0005737">
    <property type="term" value="C:cytoplasm"/>
    <property type="evidence" value="ECO:0000318"/>
    <property type="project" value="GO_Central"/>
</dbReference>
<dbReference type="GO" id="GO:0005829">
    <property type="term" value="C:cytosol"/>
    <property type="evidence" value="ECO:0007669"/>
    <property type="project" value="UniProtKB-SubCell"/>
</dbReference>
<dbReference type="GO" id="GO:0015630">
    <property type="term" value="C:microtubule cytoskeleton"/>
    <property type="evidence" value="ECO:0000318"/>
    <property type="project" value="GO_Central"/>
</dbReference>
<dbReference type="GO" id="GO:0004181">
    <property type="term" value="F:metallocarboxypeptidase activity"/>
    <property type="evidence" value="ECO:0000250"/>
    <property type="project" value="UniProtKB"/>
</dbReference>
<dbReference type="GO" id="GO:0015631">
    <property type="term" value="F:tubulin binding"/>
    <property type="evidence" value="ECO:0000318"/>
    <property type="project" value="GO_Central"/>
</dbReference>
<dbReference type="GO" id="GO:0008270">
    <property type="term" value="F:zinc ion binding"/>
    <property type="evidence" value="ECO:0007669"/>
    <property type="project" value="InterPro"/>
</dbReference>
<dbReference type="GO" id="GO:0035610">
    <property type="term" value="P:protein side chain deglutamylation"/>
    <property type="evidence" value="ECO:0000250"/>
    <property type="project" value="UniProtKB"/>
</dbReference>
<dbReference type="GO" id="GO:0006508">
    <property type="term" value="P:proteolysis"/>
    <property type="evidence" value="ECO:0007669"/>
    <property type="project" value="UniProtKB-KW"/>
</dbReference>
<dbReference type="CDD" id="cd06907">
    <property type="entry name" value="M14_AGBL2-3_like"/>
    <property type="match status" value="1"/>
</dbReference>
<dbReference type="FunFam" id="2.60.40.3120:FF:000001">
    <property type="entry name" value="cytosolic carboxypeptidase 1 isoform X1"/>
    <property type="match status" value="1"/>
</dbReference>
<dbReference type="FunFam" id="3.40.630.10:FF:000011">
    <property type="entry name" value="cytosolic carboxypeptidase 2 isoform X1"/>
    <property type="match status" value="1"/>
</dbReference>
<dbReference type="Gene3D" id="2.60.40.3120">
    <property type="match status" value="1"/>
</dbReference>
<dbReference type="Gene3D" id="3.40.630.10">
    <property type="entry name" value="Zn peptidases"/>
    <property type="match status" value="1"/>
</dbReference>
<dbReference type="InterPro" id="IPR050821">
    <property type="entry name" value="Cytosolic_carboxypeptidase"/>
</dbReference>
<dbReference type="InterPro" id="IPR040626">
    <property type="entry name" value="Pepdidase_M14_N"/>
</dbReference>
<dbReference type="InterPro" id="IPR000834">
    <property type="entry name" value="Peptidase_M14"/>
</dbReference>
<dbReference type="PANTHER" id="PTHR12756">
    <property type="entry name" value="CYTOSOLIC CARBOXYPEPTIDASE"/>
    <property type="match status" value="1"/>
</dbReference>
<dbReference type="PANTHER" id="PTHR12756:SF23">
    <property type="entry name" value="CYTOSOLIC CARBOXYPEPTIDASE 3"/>
    <property type="match status" value="1"/>
</dbReference>
<dbReference type="Pfam" id="PF18027">
    <property type="entry name" value="Pepdidase_M14_N"/>
    <property type="match status" value="1"/>
</dbReference>
<dbReference type="Pfam" id="PF00246">
    <property type="entry name" value="Peptidase_M14"/>
    <property type="match status" value="1"/>
</dbReference>
<dbReference type="SUPFAM" id="SSF53187">
    <property type="entry name" value="Zn-dependent exopeptidases"/>
    <property type="match status" value="1"/>
</dbReference>
<dbReference type="PROSITE" id="PS52035">
    <property type="entry name" value="PEPTIDASE_M14"/>
    <property type="match status" value="1"/>
</dbReference>
<name>CBPC3_BOVIN</name>
<reference key="1">
    <citation type="journal article" date="2009" name="Science">
        <title>The genome sequence of taurine cattle: a window to ruminant biology and evolution.</title>
        <authorList>
            <consortium name="The bovine genome sequencing and analysis consortium"/>
        </authorList>
    </citation>
    <scope>NUCLEOTIDE SEQUENCE [LARGE SCALE GENOMIC DNA]</scope>
</reference>
<keyword id="KW-0121">Carboxypeptidase</keyword>
<keyword id="KW-0963">Cytoplasm</keyword>
<keyword id="KW-0378">Hydrolase</keyword>
<keyword id="KW-0479">Metal-binding</keyword>
<keyword id="KW-0482">Metalloprotease</keyword>
<keyword id="KW-0645">Protease</keyword>
<keyword id="KW-1185">Reference proteome</keyword>
<keyword id="KW-0862">Zinc</keyword>
<organism>
    <name type="scientific">Bos taurus</name>
    <name type="common">Bovine</name>
    <dbReference type="NCBI Taxonomy" id="9913"/>
    <lineage>
        <taxon>Eukaryota</taxon>
        <taxon>Metazoa</taxon>
        <taxon>Chordata</taxon>
        <taxon>Craniata</taxon>
        <taxon>Vertebrata</taxon>
        <taxon>Euteleostomi</taxon>
        <taxon>Mammalia</taxon>
        <taxon>Eutheria</taxon>
        <taxon>Laurasiatheria</taxon>
        <taxon>Artiodactyla</taxon>
        <taxon>Ruminantia</taxon>
        <taxon>Pecora</taxon>
        <taxon>Bovidae</taxon>
        <taxon>Bovinae</taxon>
        <taxon>Bos</taxon>
    </lineage>
</organism>
<evidence type="ECO:0000250" key="1"/>
<evidence type="ECO:0000250" key="2">
    <source>
        <dbReference type="UniProtKB" id="Q8CDP0"/>
    </source>
</evidence>
<evidence type="ECO:0000255" key="3">
    <source>
        <dbReference type="PROSITE-ProRule" id="PRU01379"/>
    </source>
</evidence>
<evidence type="ECO:0000256" key="4">
    <source>
        <dbReference type="SAM" id="MobiDB-lite"/>
    </source>
</evidence>
<evidence type="ECO:0000305" key="5"/>
<proteinExistence type="inferred from homology"/>
<comment type="function">
    <text evidence="2">Metallocarboxypeptidase that mediates deglutamylation of tubulin and non-tubulin target proteins. Catalyzes the removal of polyglutamate side chains present on the gamma-carboxyl group of glutamate residues within the C-terminal tail of tubulin protein. Specifically cleaves tubulin long-side-chains, while it is not able to remove the branching point glutamate. Also catalyzes the removal of polyglutamate residues from the carboxy-terminus of non-tubulin proteins such as MYLK. May catalyze the hydrolysis of aspartate from the carboxy-terminus of target proteins. Does not show detyrosinase or deglycylase activities from the carboxy-terminus of target proteins.</text>
</comment>
<comment type="catalytic activity">
    <reaction evidence="2">
        <text>(L-glutamyl)(n+1)-gamma-L-glutamyl-L-glutamyl-[protein] + H2O = (L-glutamyl)(n)-gamma-L-glutamyl-L-glutamyl-[protein] + L-glutamate</text>
        <dbReference type="Rhea" id="RHEA:60004"/>
        <dbReference type="Rhea" id="RHEA-COMP:15519"/>
        <dbReference type="Rhea" id="RHEA-COMP:15675"/>
        <dbReference type="ChEBI" id="CHEBI:15377"/>
        <dbReference type="ChEBI" id="CHEBI:29985"/>
        <dbReference type="ChEBI" id="CHEBI:143623"/>
    </reaction>
    <physiologicalReaction direction="left-to-right" evidence="2">
        <dbReference type="Rhea" id="RHEA:60005"/>
    </physiologicalReaction>
</comment>
<comment type="cofactor">
    <cofactor evidence="1">
        <name>Zn(2+)</name>
        <dbReference type="ChEBI" id="CHEBI:29105"/>
    </cofactor>
    <text evidence="1">Binds 1 zinc ion per subunit.</text>
</comment>
<comment type="subcellular location">
    <subcellularLocation>
        <location evidence="2">Cytoplasm</location>
        <location evidence="2">Cytosol</location>
    </subcellularLocation>
</comment>
<comment type="similarity">
    <text evidence="5">Belongs to the peptidase M14 family.</text>
</comment>
<protein>
    <recommendedName>
        <fullName evidence="2">Cytosolic carboxypeptidase 3</fullName>
        <ecNumber evidence="2">3.4.17.-</ecNumber>
    </recommendedName>
    <alternativeName>
        <fullName>ATP/GTP-binding protein-like 3</fullName>
    </alternativeName>
    <alternativeName>
        <fullName evidence="5">Protein deglutamylase CCP3</fullName>
    </alternativeName>
</protein>
<sequence>MSEDSEKEDYSDRTISDEDESDEDNFMKFVNEDIHQCALLTADSISDPFFPRTTQILLEYQLGRWVPRLRKPRDLYGVSSSGPLSPTRWPYHCEVIDEKIEHIDWTPSNPEPMYIPTGLEVEPLYANSKEETVVYLAEDAYKEPCFVYSRVGGNRTPLKQPVDNCDDTLMFEARFESGNLQKVVKVGEYEYQLTVRPDLFTNKHTQWYYFQVTNTQAGIVYRFTITNFTKPASLYNRGMRPLFYSEKEASAHNIGWQRIGDQIKYYRNNQGQDRHHHFSLTWTFQFPHSKDTCYFAHCYPYTYTNLQEYLSGINNDPVRSKFCKIRVLCHTIARNMVYILTITTPLKNSESRKRKAVILTARVHPGETNSSWIMKGFLDYILGNSSDAKLLRDTFVFKVVPMLNPDGVIVGNYRCSLAGRDLNRNYTSLLKESFPSVWYTRNMIRRLMEKREVILYCDLHGHSKKENIFMYGCDGSDRCKALYLQQRIFPLMLSKNCPDKFSFSSCKFNIQKSKEGTGRVVMWKMGIRNSFTMEATFCGSTLGNKRGTHFNTKDLESMGYHFCDSLLDYCDPDRTKYYQCLKELDEMEKHINLEKVIDDSDTSLKEITLDLETSSHASDSSESNDSQTDLLKLNSQIKTKKKQLKTKKERNSTIERHQNIREEEQEVCDKGHLVQRHKESDSDVTDTRPSISDDCIFDYFRRQLPNQGFFKILGLKFYCGYTHMISQTVIQKLSRDQQRCVLGTDKKNQETVQPRNNDLYGNCIKVTSLKCPLNKQTPIWTEKTRIPTEDLHHNLKSNMKECPSFQSKKADINWTDDEKRIYRDKNIAQTQEILQYLLPIMRSTKNVQTTQIKEVFNPRTSFQIQHQQKPSSNINIRKCSTSWTPPRNLPLISQRTLIVSTSKWLQPLDWKSSESSLPLGGPKKRRKYSRVKATKTKDMKAASSKWEMTPSSSEKDADKSLQAEGSSQQGTMQTAPHPTKTKGEQPKKKHGQPAFHLKLQRDT</sequence>
<feature type="chain" id="PRO_0000403760" description="Cytosolic carboxypeptidase 3">
    <location>
        <begin position="1"/>
        <end position="1003"/>
    </location>
</feature>
<feature type="domain" description="Peptidase M14" evidence="3">
    <location>
        <begin position="299"/>
        <end position="570"/>
    </location>
</feature>
<feature type="region of interest" description="Disordered" evidence="4">
    <location>
        <begin position="1"/>
        <end position="23"/>
    </location>
</feature>
<feature type="region of interest" description="Disordered" evidence="4">
    <location>
        <begin position="642"/>
        <end position="662"/>
    </location>
</feature>
<feature type="region of interest" description="Disordered" evidence="4">
    <location>
        <begin position="911"/>
        <end position="1003"/>
    </location>
</feature>
<feature type="compositionally biased region" description="Basic and acidic residues" evidence="4">
    <location>
        <begin position="649"/>
        <end position="662"/>
    </location>
</feature>
<feature type="compositionally biased region" description="Basic residues" evidence="4">
    <location>
        <begin position="922"/>
        <end position="934"/>
    </location>
</feature>
<feature type="compositionally biased region" description="Polar residues" evidence="4">
    <location>
        <begin position="963"/>
        <end position="976"/>
    </location>
</feature>
<feature type="active site" description="Proton donor/acceptor" evidence="3">
    <location>
        <position position="534"/>
    </location>
</feature>
<feature type="binding site" evidence="3">
    <location>
        <position position="364"/>
    </location>
    <ligand>
        <name>Zn(2+)</name>
        <dbReference type="ChEBI" id="CHEBI:29105"/>
        <note>catalytic</note>
    </ligand>
</feature>
<feature type="binding site" evidence="3">
    <location>
        <position position="367"/>
    </location>
    <ligand>
        <name>Zn(2+)</name>
        <dbReference type="ChEBI" id="CHEBI:29105"/>
        <note>catalytic</note>
    </ligand>
</feature>
<feature type="binding site" evidence="3">
    <location>
        <position position="460"/>
    </location>
    <ligand>
        <name>Zn(2+)</name>
        <dbReference type="ChEBI" id="CHEBI:29105"/>
        <note>catalytic</note>
    </ligand>
</feature>
<accession>E1B9D8</accession>